<proteinExistence type="inferred from homology"/>
<comment type="function">
    <text evidence="1">Chaperone involved in the maturation of iron-sulfur cluster-containing proteins. Has a low intrinsic ATPase activity which is markedly stimulated by HscB.</text>
</comment>
<comment type="similarity">
    <text evidence="1">Belongs to the heat shock protein 70 family.</text>
</comment>
<evidence type="ECO:0000255" key="1">
    <source>
        <dbReference type="HAMAP-Rule" id="MF_00679"/>
    </source>
</evidence>
<sequence length="621" mass="66246">MALLQISEPGMSPAPHQRRLAVGIDLGTTNSLVAAVRNSIPEVLPDEHGRALLPSVVRYLPNGNAHIGYKAQDEAVRDPKNTIISVKRFMGRGVRDVANIEHSLYDFVDAPGMVQLKTAAGIKSPVEVSAEILATLRQRAEDSLGDELVGAVITVPAYFDDAQRQATKDAAQLAGLEVLRLLNEPTAAAIAYGLDNAAEGIYAVYDLGGGTFDISVLKLTKGVFEVMSTGGDSALGGDDFDQRLLCWIVEQVGLQPLSAEDSRLLMVRARAAKEALSSSDSTVIDAVLTSGEIVHLTLDADTFIQITANLVQKTLTPVRKALRDAGVGPEDVKGVVLVGGATRMPAIRKAVGDYFGQQPLTNLDPDRVVALGAAMQANLLAGNHAPGEDWLLLDVIPLSLGVETMGGLVEKIVPRNSTIPVARAQEFTTFKDGQTAMAIHVLQGERELASDCRSLARFELRGIPPMVAGAARIRVTYQVDADGLLSVSARETGSGVEASVSVKPSYGLADDDIARMLQESFQEAEHDMKNRALAEERVEAARLVEATTRALETDGNLLSADERAAVDELMANVSEIAKGEDHRAIKAAVERLSQGTDEFAARRMDRSIKSALAGKKVQEIG</sequence>
<keyword id="KW-0067">ATP-binding</keyword>
<keyword id="KW-0143">Chaperone</keyword>
<keyword id="KW-0547">Nucleotide-binding</keyword>
<keyword id="KW-1185">Reference proteome</keyword>
<accession>Q1LPL1</accession>
<feature type="chain" id="PRO_1000044880" description="Chaperone protein HscA homolog">
    <location>
        <begin position="1"/>
        <end position="621"/>
    </location>
</feature>
<gene>
    <name evidence="1" type="primary">hscA</name>
    <name type="ordered locus">Rmet_1029</name>
</gene>
<protein>
    <recommendedName>
        <fullName evidence="1">Chaperone protein HscA homolog</fullName>
    </recommendedName>
</protein>
<organism>
    <name type="scientific">Cupriavidus metallidurans (strain ATCC 43123 / DSM 2839 / NBRC 102507 / CH34)</name>
    <name type="common">Ralstonia metallidurans</name>
    <dbReference type="NCBI Taxonomy" id="266264"/>
    <lineage>
        <taxon>Bacteria</taxon>
        <taxon>Pseudomonadati</taxon>
        <taxon>Pseudomonadota</taxon>
        <taxon>Betaproteobacteria</taxon>
        <taxon>Burkholderiales</taxon>
        <taxon>Burkholderiaceae</taxon>
        <taxon>Cupriavidus</taxon>
    </lineage>
</organism>
<name>HSCA_CUPMC</name>
<reference key="1">
    <citation type="journal article" date="2010" name="PLoS ONE">
        <title>The complete genome sequence of Cupriavidus metallidurans strain CH34, a master survivalist in harsh and anthropogenic environments.</title>
        <authorList>
            <person name="Janssen P.J."/>
            <person name="Van Houdt R."/>
            <person name="Moors H."/>
            <person name="Monsieurs P."/>
            <person name="Morin N."/>
            <person name="Michaux A."/>
            <person name="Benotmane M.A."/>
            <person name="Leys N."/>
            <person name="Vallaeys T."/>
            <person name="Lapidus A."/>
            <person name="Monchy S."/>
            <person name="Medigue C."/>
            <person name="Taghavi S."/>
            <person name="McCorkle S."/>
            <person name="Dunn J."/>
            <person name="van der Lelie D."/>
            <person name="Mergeay M."/>
        </authorList>
    </citation>
    <scope>NUCLEOTIDE SEQUENCE [LARGE SCALE GENOMIC DNA]</scope>
    <source>
        <strain>ATCC 43123 / DSM 2839 / NBRC 102507 / CH34</strain>
    </source>
</reference>
<dbReference type="EMBL" id="CP000352">
    <property type="protein sequence ID" value="ABF07915.1"/>
    <property type="molecule type" value="Genomic_DNA"/>
</dbReference>
<dbReference type="RefSeq" id="WP_011515822.1">
    <property type="nucleotide sequence ID" value="NC_007973.1"/>
</dbReference>
<dbReference type="SMR" id="Q1LPL1"/>
<dbReference type="STRING" id="266264.Rmet_1029"/>
<dbReference type="KEGG" id="rme:Rmet_1029"/>
<dbReference type="eggNOG" id="COG0443">
    <property type="taxonomic scope" value="Bacteria"/>
</dbReference>
<dbReference type="HOGENOM" id="CLU_005965_2_1_4"/>
<dbReference type="Proteomes" id="UP000002429">
    <property type="component" value="Chromosome"/>
</dbReference>
<dbReference type="GO" id="GO:0005524">
    <property type="term" value="F:ATP binding"/>
    <property type="evidence" value="ECO:0007669"/>
    <property type="project" value="UniProtKB-KW"/>
</dbReference>
<dbReference type="GO" id="GO:0016887">
    <property type="term" value="F:ATP hydrolysis activity"/>
    <property type="evidence" value="ECO:0007669"/>
    <property type="project" value="UniProtKB-UniRule"/>
</dbReference>
<dbReference type="GO" id="GO:0140662">
    <property type="term" value="F:ATP-dependent protein folding chaperone"/>
    <property type="evidence" value="ECO:0007669"/>
    <property type="project" value="InterPro"/>
</dbReference>
<dbReference type="GO" id="GO:0051082">
    <property type="term" value="F:unfolded protein binding"/>
    <property type="evidence" value="ECO:0007669"/>
    <property type="project" value="InterPro"/>
</dbReference>
<dbReference type="GO" id="GO:0016226">
    <property type="term" value="P:iron-sulfur cluster assembly"/>
    <property type="evidence" value="ECO:0007669"/>
    <property type="project" value="InterPro"/>
</dbReference>
<dbReference type="CDD" id="cd10236">
    <property type="entry name" value="ASKHA_NBD_HSP70_HscA"/>
    <property type="match status" value="1"/>
</dbReference>
<dbReference type="FunFam" id="3.30.420.40:FF:000046">
    <property type="entry name" value="Chaperone protein HscA"/>
    <property type="match status" value="1"/>
</dbReference>
<dbReference type="FunFam" id="2.60.34.10:FF:000005">
    <property type="entry name" value="Chaperone protein HscA homolog"/>
    <property type="match status" value="1"/>
</dbReference>
<dbReference type="Gene3D" id="1.20.1270.10">
    <property type="match status" value="1"/>
</dbReference>
<dbReference type="Gene3D" id="3.30.420.40">
    <property type="match status" value="2"/>
</dbReference>
<dbReference type="Gene3D" id="3.90.640.10">
    <property type="entry name" value="Actin, Chain A, domain 4"/>
    <property type="match status" value="1"/>
</dbReference>
<dbReference type="Gene3D" id="2.60.34.10">
    <property type="entry name" value="Substrate Binding Domain Of DNAk, Chain A, domain 1"/>
    <property type="match status" value="1"/>
</dbReference>
<dbReference type="HAMAP" id="MF_00679">
    <property type="entry name" value="HscA"/>
    <property type="match status" value="1"/>
</dbReference>
<dbReference type="InterPro" id="IPR043129">
    <property type="entry name" value="ATPase_NBD"/>
</dbReference>
<dbReference type="InterPro" id="IPR018181">
    <property type="entry name" value="Heat_shock_70_CS"/>
</dbReference>
<dbReference type="InterPro" id="IPR042039">
    <property type="entry name" value="HscA_NBD"/>
</dbReference>
<dbReference type="InterPro" id="IPR029048">
    <property type="entry name" value="HSP70_C_sf"/>
</dbReference>
<dbReference type="InterPro" id="IPR029047">
    <property type="entry name" value="HSP70_peptide-bd_sf"/>
</dbReference>
<dbReference type="InterPro" id="IPR013126">
    <property type="entry name" value="Hsp_70_fam"/>
</dbReference>
<dbReference type="InterPro" id="IPR010236">
    <property type="entry name" value="ISC_FeS_clus_asmbl_HscA"/>
</dbReference>
<dbReference type="NCBIfam" id="TIGR01991">
    <property type="entry name" value="HscA"/>
    <property type="match status" value="1"/>
</dbReference>
<dbReference type="NCBIfam" id="NF003520">
    <property type="entry name" value="PRK05183.1"/>
    <property type="match status" value="1"/>
</dbReference>
<dbReference type="PANTHER" id="PTHR19375">
    <property type="entry name" value="HEAT SHOCK PROTEIN 70KDA"/>
    <property type="match status" value="1"/>
</dbReference>
<dbReference type="Pfam" id="PF00012">
    <property type="entry name" value="HSP70"/>
    <property type="match status" value="1"/>
</dbReference>
<dbReference type="PRINTS" id="PR00301">
    <property type="entry name" value="HEATSHOCK70"/>
</dbReference>
<dbReference type="SUPFAM" id="SSF53067">
    <property type="entry name" value="Actin-like ATPase domain"/>
    <property type="match status" value="2"/>
</dbReference>
<dbReference type="SUPFAM" id="SSF100934">
    <property type="entry name" value="Heat shock protein 70kD (HSP70), C-terminal subdomain"/>
    <property type="match status" value="1"/>
</dbReference>
<dbReference type="SUPFAM" id="SSF100920">
    <property type="entry name" value="Heat shock protein 70kD (HSP70), peptide-binding domain"/>
    <property type="match status" value="1"/>
</dbReference>
<dbReference type="PROSITE" id="PS00297">
    <property type="entry name" value="HSP70_1"/>
    <property type="match status" value="1"/>
</dbReference>
<dbReference type="PROSITE" id="PS00329">
    <property type="entry name" value="HSP70_2"/>
    <property type="match status" value="1"/>
</dbReference>
<dbReference type="PROSITE" id="PS01036">
    <property type="entry name" value="HSP70_3"/>
    <property type="match status" value="1"/>
</dbReference>